<name>NRDR_LACDB</name>
<comment type="function">
    <text evidence="1">Negatively regulates transcription of bacterial ribonucleotide reductase nrd genes and operons by binding to NrdR-boxes.</text>
</comment>
<comment type="cofactor">
    <cofactor evidence="1">
        <name>Zn(2+)</name>
        <dbReference type="ChEBI" id="CHEBI:29105"/>
    </cofactor>
    <text evidence="1">Binds 1 zinc ion.</text>
</comment>
<comment type="similarity">
    <text evidence="1">Belongs to the NrdR family.</text>
</comment>
<evidence type="ECO:0000255" key="1">
    <source>
        <dbReference type="HAMAP-Rule" id="MF_00440"/>
    </source>
</evidence>
<organism>
    <name type="scientific">Lactobacillus delbrueckii subsp. bulgaricus (strain ATCC BAA-365 / Lb-18)</name>
    <dbReference type="NCBI Taxonomy" id="321956"/>
    <lineage>
        <taxon>Bacteria</taxon>
        <taxon>Bacillati</taxon>
        <taxon>Bacillota</taxon>
        <taxon>Bacilli</taxon>
        <taxon>Lactobacillales</taxon>
        <taxon>Lactobacillaceae</taxon>
        <taxon>Lactobacillus</taxon>
    </lineage>
</organism>
<protein>
    <recommendedName>
        <fullName evidence="1">Transcriptional repressor NrdR</fullName>
    </recommendedName>
</protein>
<sequence length="155" mass="17933">MLCPNCHQNASRVIDSRPTDEGRTIRRRRECENCGYRFTTFERVEQSPLLVIKNDGTREAFSREKILNGVAAACQKRPVTSEQLNKLVDNVENRIRAKGVSEIYSKEIGELVMDQLADIDDVAYIRFASIYRQFTDMSSFMKTMEDMMDRHSKAK</sequence>
<proteinExistence type="inferred from homology"/>
<gene>
    <name evidence="1" type="primary">nrdR</name>
    <name type="ordered locus">LBUL_1404</name>
</gene>
<keyword id="KW-0067">ATP-binding</keyword>
<keyword id="KW-0238">DNA-binding</keyword>
<keyword id="KW-0479">Metal-binding</keyword>
<keyword id="KW-0547">Nucleotide-binding</keyword>
<keyword id="KW-0678">Repressor</keyword>
<keyword id="KW-0804">Transcription</keyword>
<keyword id="KW-0805">Transcription regulation</keyword>
<keyword id="KW-0862">Zinc</keyword>
<keyword id="KW-0863">Zinc-finger</keyword>
<reference key="1">
    <citation type="journal article" date="2006" name="Proc. Natl. Acad. Sci. U.S.A.">
        <title>Comparative genomics of the lactic acid bacteria.</title>
        <authorList>
            <person name="Makarova K.S."/>
            <person name="Slesarev A."/>
            <person name="Wolf Y.I."/>
            <person name="Sorokin A."/>
            <person name="Mirkin B."/>
            <person name="Koonin E.V."/>
            <person name="Pavlov A."/>
            <person name="Pavlova N."/>
            <person name="Karamychev V."/>
            <person name="Polouchine N."/>
            <person name="Shakhova V."/>
            <person name="Grigoriev I."/>
            <person name="Lou Y."/>
            <person name="Rohksar D."/>
            <person name="Lucas S."/>
            <person name="Huang K."/>
            <person name="Goodstein D.M."/>
            <person name="Hawkins T."/>
            <person name="Plengvidhya V."/>
            <person name="Welker D."/>
            <person name="Hughes J."/>
            <person name="Goh Y."/>
            <person name="Benson A."/>
            <person name="Baldwin K."/>
            <person name="Lee J.-H."/>
            <person name="Diaz-Muniz I."/>
            <person name="Dosti B."/>
            <person name="Smeianov V."/>
            <person name="Wechter W."/>
            <person name="Barabote R."/>
            <person name="Lorca G."/>
            <person name="Altermann E."/>
            <person name="Barrangou R."/>
            <person name="Ganesan B."/>
            <person name="Xie Y."/>
            <person name="Rawsthorne H."/>
            <person name="Tamir D."/>
            <person name="Parker C."/>
            <person name="Breidt F."/>
            <person name="Broadbent J.R."/>
            <person name="Hutkins R."/>
            <person name="O'Sullivan D."/>
            <person name="Steele J."/>
            <person name="Unlu G."/>
            <person name="Saier M.H. Jr."/>
            <person name="Klaenhammer T."/>
            <person name="Richardson P."/>
            <person name="Kozyavkin S."/>
            <person name="Weimer B.C."/>
            <person name="Mills D.A."/>
        </authorList>
    </citation>
    <scope>NUCLEOTIDE SEQUENCE [LARGE SCALE GENOMIC DNA]</scope>
    <source>
        <strain>ATCC BAA-365 / Lb-18</strain>
    </source>
</reference>
<accession>Q049F5</accession>
<dbReference type="EMBL" id="CP000412">
    <property type="protein sequence ID" value="ABJ58917.1"/>
    <property type="molecule type" value="Genomic_DNA"/>
</dbReference>
<dbReference type="RefSeq" id="WP_002879222.1">
    <property type="nucleotide sequence ID" value="NC_008529.1"/>
</dbReference>
<dbReference type="SMR" id="Q049F5"/>
<dbReference type="GeneID" id="69669312"/>
<dbReference type="KEGG" id="lbu:LBUL_1404"/>
<dbReference type="HOGENOM" id="CLU_108412_0_0_9"/>
<dbReference type="BioCyc" id="LDEL321956:LBUL_RS06610-MONOMER"/>
<dbReference type="GO" id="GO:0005524">
    <property type="term" value="F:ATP binding"/>
    <property type="evidence" value="ECO:0007669"/>
    <property type="project" value="UniProtKB-KW"/>
</dbReference>
<dbReference type="GO" id="GO:0003677">
    <property type="term" value="F:DNA binding"/>
    <property type="evidence" value="ECO:0007669"/>
    <property type="project" value="UniProtKB-KW"/>
</dbReference>
<dbReference type="GO" id="GO:0008270">
    <property type="term" value="F:zinc ion binding"/>
    <property type="evidence" value="ECO:0007669"/>
    <property type="project" value="UniProtKB-UniRule"/>
</dbReference>
<dbReference type="GO" id="GO:0045892">
    <property type="term" value="P:negative regulation of DNA-templated transcription"/>
    <property type="evidence" value="ECO:0007669"/>
    <property type="project" value="UniProtKB-UniRule"/>
</dbReference>
<dbReference type="HAMAP" id="MF_00440">
    <property type="entry name" value="NrdR"/>
    <property type="match status" value="1"/>
</dbReference>
<dbReference type="InterPro" id="IPR005144">
    <property type="entry name" value="ATP-cone_dom"/>
</dbReference>
<dbReference type="InterPro" id="IPR055173">
    <property type="entry name" value="NrdR-like_N"/>
</dbReference>
<dbReference type="InterPro" id="IPR003796">
    <property type="entry name" value="RNR_NrdR-like"/>
</dbReference>
<dbReference type="NCBIfam" id="TIGR00244">
    <property type="entry name" value="transcriptional regulator NrdR"/>
    <property type="match status" value="1"/>
</dbReference>
<dbReference type="PANTHER" id="PTHR30455">
    <property type="entry name" value="TRANSCRIPTIONAL REPRESSOR NRDR"/>
    <property type="match status" value="1"/>
</dbReference>
<dbReference type="PANTHER" id="PTHR30455:SF2">
    <property type="entry name" value="TRANSCRIPTIONAL REPRESSOR NRDR"/>
    <property type="match status" value="1"/>
</dbReference>
<dbReference type="Pfam" id="PF03477">
    <property type="entry name" value="ATP-cone"/>
    <property type="match status" value="1"/>
</dbReference>
<dbReference type="Pfam" id="PF22811">
    <property type="entry name" value="Zn_ribbon_NrdR"/>
    <property type="match status" value="1"/>
</dbReference>
<dbReference type="PROSITE" id="PS51161">
    <property type="entry name" value="ATP_CONE"/>
    <property type="match status" value="1"/>
</dbReference>
<feature type="chain" id="PRO_1000080764" description="Transcriptional repressor NrdR">
    <location>
        <begin position="1"/>
        <end position="155"/>
    </location>
</feature>
<feature type="domain" description="ATP-cone" evidence="1">
    <location>
        <begin position="49"/>
        <end position="139"/>
    </location>
</feature>
<feature type="zinc finger region" evidence="1">
    <location>
        <begin position="3"/>
        <end position="34"/>
    </location>
</feature>